<proteinExistence type="inferred from homology"/>
<name>YD14B_YEAST</name>
<keyword id="KW-0064">Aspartyl protease</keyword>
<keyword id="KW-0067">ATP-binding</keyword>
<keyword id="KW-0963">Cytoplasm</keyword>
<keyword id="KW-0229">DNA integration</keyword>
<keyword id="KW-0233">DNA recombination</keyword>
<keyword id="KW-0238">DNA-binding</keyword>
<keyword id="KW-0239">DNA-directed DNA polymerase</keyword>
<keyword id="KW-0255">Endonuclease</keyword>
<keyword id="KW-0378">Hydrolase</keyword>
<keyword id="KW-0460">Magnesium</keyword>
<keyword id="KW-0479">Metal-binding</keyword>
<keyword id="KW-0511">Multifunctional enzyme</keyword>
<keyword id="KW-0540">Nuclease</keyword>
<keyword id="KW-0547">Nucleotide-binding</keyword>
<keyword id="KW-0548">Nucleotidyltransferase</keyword>
<keyword id="KW-0539">Nucleus</keyword>
<keyword id="KW-0645">Protease</keyword>
<keyword id="KW-1185">Reference proteome</keyword>
<keyword id="KW-0688">Ribosomal frameshifting</keyword>
<keyword id="KW-0694">RNA-binding</keyword>
<keyword id="KW-0695">RNA-directed DNA polymerase</keyword>
<keyword id="KW-0808">Transferase</keyword>
<keyword id="KW-0814">Transposable element</keyword>
<keyword id="KW-0815">Transposition</keyword>
<keyword id="KW-1188">Viral release from host cell</keyword>
<keyword id="KW-0917">Virion maturation</keyword>
<keyword id="KW-0862">Zinc</keyword>
<keyword id="KW-0863">Zinc-finger</keyword>
<evidence type="ECO:0000250" key="1"/>
<evidence type="ECO:0000255" key="2">
    <source>
        <dbReference type="PROSITE-ProRule" id="PRU00457"/>
    </source>
</evidence>
<evidence type="ECO:0000255" key="3">
    <source>
        <dbReference type="PROSITE-ProRule" id="PRU10094"/>
    </source>
</evidence>
<evidence type="ECO:0000256" key="4">
    <source>
        <dbReference type="SAM" id="MobiDB-lite"/>
    </source>
</evidence>
<comment type="function">
    <text evidence="1">Capsid protein (CA) is the structural component of the virus-like particle (VLP), forming the shell that encapsulates the retrotransposons dimeric RNA genome. The particles are assembled from trimer-clustered units and there are holes in the capsid shells that allow for the diffusion of macromolecules. CA also has nucleocapsid-like chaperone activity, promoting primer tRNA(i)-Met annealing to the multipartite primer-binding site (PBS), dimerization of Ty1 RNA and initiation of reverse transcription (By similarity).</text>
</comment>
<comment type="function">
    <text evidence="1">The aspartyl protease (PR) mediates the proteolytic cleavages of the Gag and Gag-Pol polyproteins after assembly of the VLP.</text>
</comment>
<comment type="function">
    <text evidence="1">Reverse transcriptase/ribonuclease H (RT) is a multifunctional enzyme that catalyzes the conversion of the retro-elements RNA genome into dsDNA within the VLP. The enzyme displays a DNA polymerase activity that can copy either DNA or RNA templates, and a ribonuclease H (RNase H) activity that cleaves the RNA strand of RNA-DNA heteroduplexes during plus-strand synthesis and hydrolyzes RNA primers. The conversion leads to a linear dsDNA copy of the retrotransposon that includes long terminal repeats (LTRs) at both ends (By similarity).</text>
</comment>
<comment type="function">
    <text evidence="1">Integrase (IN) targets the VLP to the nucleus, where a subparticle preintegration complex (PIC) containing at least integrase and the newly synthesized dsDNA copy of the retrotransposon must transit the nuclear membrane. Once in the nucleus, integrase performs the integration of the dsDNA into the host genome (By similarity).</text>
</comment>
<comment type="catalytic activity">
    <reaction>
        <text>DNA(n) + a 2'-deoxyribonucleoside 5'-triphosphate = DNA(n+1) + diphosphate</text>
        <dbReference type="Rhea" id="RHEA:22508"/>
        <dbReference type="Rhea" id="RHEA-COMP:17339"/>
        <dbReference type="Rhea" id="RHEA-COMP:17340"/>
        <dbReference type="ChEBI" id="CHEBI:33019"/>
        <dbReference type="ChEBI" id="CHEBI:61560"/>
        <dbReference type="ChEBI" id="CHEBI:173112"/>
        <dbReference type="EC" id="2.7.7.49"/>
    </reaction>
</comment>
<comment type="catalytic activity">
    <reaction>
        <text>DNA(n) + a 2'-deoxyribonucleoside 5'-triphosphate = DNA(n+1) + diphosphate</text>
        <dbReference type="Rhea" id="RHEA:22508"/>
        <dbReference type="Rhea" id="RHEA-COMP:17339"/>
        <dbReference type="Rhea" id="RHEA-COMP:17340"/>
        <dbReference type="ChEBI" id="CHEBI:33019"/>
        <dbReference type="ChEBI" id="CHEBI:61560"/>
        <dbReference type="ChEBI" id="CHEBI:173112"/>
        <dbReference type="EC" id="2.7.7.7"/>
    </reaction>
</comment>
<comment type="catalytic activity">
    <reaction>
        <text>Endonucleolytic cleavage to 5'-phosphomonoester.</text>
        <dbReference type="EC" id="3.1.26.4"/>
    </reaction>
</comment>
<comment type="subunit">
    <text evidence="1">The capsid protein forms a homotrimer, from which the VLPs are assembled. The protease is a homodimer, whose active site consists of two apposed aspartic acid residues (By similarity).</text>
</comment>
<comment type="subcellular location">
    <subcellularLocation>
        <location>Cytoplasm</location>
    </subcellularLocation>
    <subcellularLocation>
        <location evidence="1">Nucleus</location>
    </subcellularLocation>
</comment>
<comment type="alternative products">
    <event type="ribosomal frameshifting"/>
    <isoform>
        <id>P0C2I2-1</id>
        <name>Transposon Ty1-DR5 Gag-Pol polyprotein</name>
        <sequence type="displayed"/>
    </isoform>
    <isoform>
        <id>P0CX65-1</id>
        <name>Transposon Ty1-DR5 Gag polyprotein</name>
        <sequence type="external"/>
    </isoform>
    <text evidence="1">The Gag-Pol polyprotein is generated by a +1 ribosomal frameshift between the codons for Leu-435 and Gly-436. The ratio of Gag:Gag-Pol varies between 20:1 and 5:1 (By similarity).</text>
</comment>
<comment type="domain">
    <text evidence="1">The C-terminal RNA-binding region of CA is sufficient for all its nucleocapsid-like chaperone activities.</text>
</comment>
<comment type="domain">
    <text evidence="1">Integrase core domain contains the D-x(n)-D-x(35)-E motif, named for the phylogenetically conserved glutamic acid and aspartic acid residues and the invariant 35 amino acid spacing between the second and third acidic residues. Each acidic residue of the D,D(35)E motif is independently essential for the 3'-processing and strand transfer activities of purified integrase protein (By similarity).</text>
</comment>
<comment type="PTM">
    <text evidence="1">Initially, virus-like particles (VLPs) are composed of the structural unprocessed proteins Gag and Gag-Pol, and also contain the host initiator methionine tRNA (tRNA(i)-Met) which serves as a primer for minus-strand DNA synthesis, and a dimer of genomic Ty RNA. Processing of the polyproteins occurs within the particle and proceeds by an ordered pathway, called maturation. First, the protease (PR) is released by autocatalytic cleavage of the Gag-Pol polyprotein yielding capsid protein p45 and a Pol-p154 precursor protein. This cleavage is a prerequisite for subsequent processing of Pol-p154 at the remaining sites to release the mature structural and catalytic proteins. Maturation takes place prior to the RT reaction and is required to produce transposition-competent VLPs (By similarity).</text>
</comment>
<comment type="miscellaneous">
    <text>Retrotransposons are mobile genetic entities that are able to replicate via an RNA intermediate and a reverse transcription step. In contrast to retroviruses, retrotransposons are non-infectious, lack an envelope and remain intracellular. Ty1 retrotransposons belong to the copia elements (pseudoviridae).</text>
</comment>
<comment type="miscellaneous">
    <molecule>Isoform Transposon Ty1-DR5 Gag-Pol polyprotein</molecule>
    <text>Produced by +1 ribosomal frameshifting between codon Leu-435 and Gly-436 of the YDR316W-A ORF.</text>
</comment>
<reference key="1">
    <citation type="journal article" date="1997" name="Nature">
        <title>The nucleotide sequence of Saccharomyces cerevisiae chromosome IV.</title>
        <authorList>
            <person name="Jacq C."/>
            <person name="Alt-Moerbe J."/>
            <person name="Andre B."/>
            <person name="Arnold W."/>
            <person name="Bahr A."/>
            <person name="Ballesta J.P.G."/>
            <person name="Bargues M."/>
            <person name="Baron L."/>
            <person name="Becker A."/>
            <person name="Biteau N."/>
            <person name="Bloecker H."/>
            <person name="Blugeon C."/>
            <person name="Boskovic J."/>
            <person name="Brandt P."/>
            <person name="Brueckner M."/>
            <person name="Buitrago M.J."/>
            <person name="Coster F."/>
            <person name="Delaveau T."/>
            <person name="del Rey F."/>
            <person name="Dujon B."/>
            <person name="Eide L.G."/>
            <person name="Garcia-Cantalejo J.M."/>
            <person name="Goffeau A."/>
            <person name="Gomez-Peris A."/>
            <person name="Granotier C."/>
            <person name="Hanemann V."/>
            <person name="Hankeln T."/>
            <person name="Hoheisel J.D."/>
            <person name="Jaeger W."/>
            <person name="Jimenez A."/>
            <person name="Jonniaux J.-L."/>
            <person name="Kraemer C."/>
            <person name="Kuester H."/>
            <person name="Laamanen P."/>
            <person name="Legros Y."/>
            <person name="Louis E.J."/>
            <person name="Moeller-Rieker S."/>
            <person name="Monnet A."/>
            <person name="Moro M."/>
            <person name="Mueller-Auer S."/>
            <person name="Nussbaumer B."/>
            <person name="Paricio N."/>
            <person name="Paulin L."/>
            <person name="Perea J."/>
            <person name="Perez-Alonso M."/>
            <person name="Perez-Ortin J.E."/>
            <person name="Pohl T.M."/>
            <person name="Prydz H."/>
            <person name="Purnelle B."/>
            <person name="Rasmussen S.W."/>
            <person name="Remacha M.A."/>
            <person name="Revuelta J.L."/>
            <person name="Rieger M."/>
            <person name="Salom D."/>
            <person name="Saluz H.P."/>
            <person name="Saiz J.E."/>
            <person name="Saren A.-M."/>
            <person name="Schaefer M."/>
            <person name="Scharfe M."/>
            <person name="Schmidt E.R."/>
            <person name="Schneider C."/>
            <person name="Scholler P."/>
            <person name="Schwarz S."/>
            <person name="Soler-Mira A."/>
            <person name="Urrestarazu L.A."/>
            <person name="Verhasselt P."/>
            <person name="Vissers S."/>
            <person name="Voet M."/>
            <person name="Volckaert G."/>
            <person name="Wagner G."/>
            <person name="Wambutt R."/>
            <person name="Wedler E."/>
            <person name="Wedler H."/>
            <person name="Woelfl S."/>
            <person name="Harris D.E."/>
            <person name="Bowman S."/>
            <person name="Brown D."/>
            <person name="Churcher C.M."/>
            <person name="Connor R."/>
            <person name="Dedman K."/>
            <person name="Gentles S."/>
            <person name="Hamlin N."/>
            <person name="Hunt S."/>
            <person name="Jones L."/>
            <person name="McDonald S."/>
            <person name="Murphy L.D."/>
            <person name="Niblett D."/>
            <person name="Odell C."/>
            <person name="Oliver K."/>
            <person name="Rajandream M.A."/>
            <person name="Richards C."/>
            <person name="Shore L."/>
            <person name="Walsh S.V."/>
            <person name="Barrell B.G."/>
            <person name="Dietrich F.S."/>
            <person name="Mulligan J.T."/>
            <person name="Allen E."/>
            <person name="Araujo R."/>
            <person name="Aviles E."/>
            <person name="Berno A."/>
            <person name="Carpenter J."/>
            <person name="Chen E."/>
            <person name="Cherry J.M."/>
            <person name="Chung E."/>
            <person name="Duncan M."/>
            <person name="Hunicke-Smith S."/>
            <person name="Hyman R.W."/>
            <person name="Komp C."/>
            <person name="Lashkari D."/>
            <person name="Lew H."/>
            <person name="Lin D."/>
            <person name="Mosedale D."/>
            <person name="Nakahara K."/>
            <person name="Namath A."/>
            <person name="Oefner P."/>
            <person name="Oh C."/>
            <person name="Petel F.X."/>
            <person name="Roberts D."/>
            <person name="Schramm S."/>
            <person name="Schroeder M."/>
            <person name="Shogren T."/>
            <person name="Shroff N."/>
            <person name="Winant A."/>
            <person name="Yelton M.A."/>
            <person name="Botstein D."/>
            <person name="Davis R.W."/>
            <person name="Johnston M."/>
            <person name="Andrews S."/>
            <person name="Brinkman R."/>
            <person name="Cooper J."/>
            <person name="Ding H."/>
            <person name="Du Z."/>
            <person name="Favello A."/>
            <person name="Fulton L."/>
            <person name="Gattung S."/>
            <person name="Greco T."/>
            <person name="Hallsworth K."/>
            <person name="Hawkins J."/>
            <person name="Hillier L.W."/>
            <person name="Jier M."/>
            <person name="Johnson D."/>
            <person name="Johnston L."/>
            <person name="Kirsten J."/>
            <person name="Kucaba T."/>
            <person name="Langston Y."/>
            <person name="Latreille P."/>
            <person name="Le T."/>
            <person name="Mardis E."/>
            <person name="Menezes S."/>
            <person name="Miller N."/>
            <person name="Nhan M."/>
            <person name="Pauley A."/>
            <person name="Peluso D."/>
            <person name="Rifkin L."/>
            <person name="Riles L."/>
            <person name="Taich A."/>
            <person name="Trevaskis E."/>
            <person name="Vignati D."/>
            <person name="Wilcox L."/>
            <person name="Wohldman P."/>
            <person name="Vaudin M."/>
            <person name="Wilson R."/>
            <person name="Waterston R."/>
            <person name="Albermann K."/>
            <person name="Hani J."/>
            <person name="Heumann K."/>
            <person name="Kleine K."/>
            <person name="Mewes H.-W."/>
            <person name="Zollner A."/>
            <person name="Zaccaria P."/>
        </authorList>
    </citation>
    <scope>NUCLEOTIDE SEQUENCE [LARGE SCALE GENOMIC DNA]</scope>
    <source>
        <strain>ATCC 204508 / S288c</strain>
    </source>
</reference>
<reference key="2">
    <citation type="journal article" date="2014" name="G3 (Bethesda)">
        <title>The reference genome sequence of Saccharomyces cerevisiae: Then and now.</title>
        <authorList>
            <person name="Engel S.R."/>
            <person name="Dietrich F.S."/>
            <person name="Fisk D.G."/>
            <person name="Binkley G."/>
            <person name="Balakrishnan R."/>
            <person name="Costanzo M.C."/>
            <person name="Dwight S.S."/>
            <person name="Hitz B.C."/>
            <person name="Karra K."/>
            <person name="Nash R.S."/>
            <person name="Weng S."/>
            <person name="Wong E.D."/>
            <person name="Lloyd P."/>
            <person name="Skrzypek M.S."/>
            <person name="Miyasato S.R."/>
            <person name="Simison M."/>
            <person name="Cherry J.M."/>
        </authorList>
    </citation>
    <scope>GENOME REANNOTATION</scope>
    <source>
        <strain>ATCC 204508 / S288c</strain>
    </source>
</reference>
<reference key="3">
    <citation type="journal article" date="1998" name="Genome Res.">
        <title>Transposable elements and genome organization: a comprehensive survey of retrotransposons revealed by the complete Saccharomyces cerevisiae genome sequence.</title>
        <authorList>
            <person name="Kim J.M."/>
            <person name="Vanguri S."/>
            <person name="Boeke J.D."/>
            <person name="Gabriel A."/>
            <person name="Voytas D.F."/>
        </authorList>
    </citation>
    <scope>NOMENCLATURE</scope>
</reference>
<reference key="4">
    <citation type="journal article" date="2005" name="Cytogenet. Genome Res.">
        <title>Happy together: the life and times of Ty retrotransposons and their hosts.</title>
        <authorList>
            <person name="Lesage P."/>
            <person name="Todeschini A.L."/>
        </authorList>
    </citation>
    <scope>REVIEW</scope>
</reference>
<reference key="5">
    <citation type="journal article" date="2005" name="Cytogenet. Genome Res.">
        <title>Reverse transcriptase and integrase of the Saccharomyces cerevisiae Ty1 element.</title>
        <authorList>
            <person name="Wilhelm F.-X."/>
            <person name="Wilhelm M."/>
            <person name="Gabriel A."/>
        </authorList>
    </citation>
    <scope>REVIEW</scope>
    <scope>DOMAINS</scope>
</reference>
<organism>
    <name type="scientific">Saccharomyces cerevisiae (strain ATCC 204508 / S288c)</name>
    <name type="common">Baker's yeast</name>
    <dbReference type="NCBI Taxonomy" id="559292"/>
    <lineage>
        <taxon>Eukaryota</taxon>
        <taxon>Fungi</taxon>
        <taxon>Dikarya</taxon>
        <taxon>Ascomycota</taxon>
        <taxon>Saccharomycotina</taxon>
        <taxon>Saccharomycetes</taxon>
        <taxon>Saccharomycetales</taxon>
        <taxon>Saccharomycetaceae</taxon>
        <taxon>Saccharomyces</taxon>
    </lineage>
</organism>
<protein>
    <recommendedName>
        <fullName>Transposon Ty1-DR5 Gag-Pol polyprotein</fullName>
    </recommendedName>
    <alternativeName>
        <fullName>Gag-Pol-p199</fullName>
    </alternativeName>
    <alternativeName>
        <fullName>TY1A-TY1B</fullName>
    </alternativeName>
    <alternativeName>
        <fullName>Transposon Ty1 TYA-TYB polyprotein</fullName>
    </alternativeName>
    <alternativeName>
        <fullName>p190</fullName>
    </alternativeName>
    <component>
        <recommendedName>
            <fullName>Capsid protein</fullName>
            <shortName>CA</shortName>
        </recommendedName>
        <alternativeName>
            <fullName>Gag-p45</fullName>
        </alternativeName>
        <alternativeName>
            <fullName>p54</fullName>
        </alternativeName>
    </component>
    <component>
        <recommendedName>
            <fullName>Ty1 protease</fullName>
            <shortName>PR</shortName>
            <ecNumber>3.4.23.-</ecNumber>
        </recommendedName>
        <alternativeName>
            <fullName>Pol-p20</fullName>
        </alternativeName>
        <alternativeName>
            <fullName>p23</fullName>
        </alternativeName>
    </component>
    <component>
        <recommendedName>
            <fullName>Integrase</fullName>
            <shortName>IN</shortName>
        </recommendedName>
        <alternativeName>
            <fullName>Pol-p71</fullName>
        </alternativeName>
        <alternativeName>
            <fullName>p84</fullName>
        </alternativeName>
        <alternativeName>
            <fullName>p90</fullName>
        </alternativeName>
    </component>
    <component>
        <recommendedName>
            <fullName>Reverse transcriptase/ribonuclease H</fullName>
            <shortName>RT</shortName>
            <ecNumber>2.7.7.49</ecNumber>
            <ecNumber>2.7.7.7</ecNumber>
            <ecNumber>3.1.26.4</ecNumber>
        </recommendedName>
        <alternativeName>
            <fullName>Pol-p63</fullName>
        </alternativeName>
        <alternativeName>
            <fullName>p60</fullName>
        </alternativeName>
    </component>
</protein>
<accession>P0C2I2</accession>
<accession>D6VSU6</accession>
<dbReference type="EC" id="3.4.23.-"/>
<dbReference type="EC" id="2.7.7.49"/>
<dbReference type="EC" id="2.7.7.7"/>
<dbReference type="EC" id="3.1.26.4"/>
<dbReference type="EMBL" id="U32517">
    <property type="status" value="NOT_ANNOTATED_CDS"/>
    <property type="molecule type" value="Genomic_DNA"/>
</dbReference>
<dbReference type="EMBL" id="BK006938">
    <property type="protein sequence ID" value="DAA12156.1"/>
    <property type="molecule type" value="Genomic_DNA"/>
</dbReference>
<dbReference type="PIR" id="S69955">
    <property type="entry name" value="S69955"/>
</dbReference>
<dbReference type="RefSeq" id="NP_058150.1">
    <molecule id="P0C2I2-1"/>
    <property type="nucleotide sequence ID" value="NM_001184425.2"/>
</dbReference>
<dbReference type="SMR" id="P0C2I2"/>
<dbReference type="BioGRID" id="32372">
    <property type="interactions" value="8"/>
</dbReference>
<dbReference type="FunCoup" id="P0C2I2">
    <property type="interactions" value="166"/>
</dbReference>
<dbReference type="GlyGen" id="P0C2I2">
    <property type="glycosylation" value="3 sites"/>
</dbReference>
<dbReference type="iPTMnet" id="P0C2I2"/>
<dbReference type="PaxDb" id="4932-YDR316W-B"/>
<dbReference type="PeptideAtlas" id="P0C2I2"/>
<dbReference type="GeneID" id="851914"/>
<dbReference type="KEGG" id="sce:YDR316W-B"/>
<dbReference type="AGR" id="SGD:S000007399"/>
<dbReference type="SGD" id="S000007399">
    <property type="gene designation" value="YDR316W-B"/>
</dbReference>
<dbReference type="VEuPathDB" id="FungiDB:YDR316W-B"/>
<dbReference type="eggNOG" id="KOG0017">
    <property type="taxonomic scope" value="Eukaryota"/>
</dbReference>
<dbReference type="HOGENOM" id="CLU_244151_0_0_1"/>
<dbReference type="InParanoid" id="P0C2I2"/>
<dbReference type="OrthoDB" id="5423336at2759"/>
<dbReference type="Proteomes" id="UP000002311">
    <property type="component" value="Chromosome IV"/>
</dbReference>
<dbReference type="RNAct" id="P0C2I2">
    <property type="molecule type" value="protein"/>
</dbReference>
<dbReference type="GO" id="GO:0005737">
    <property type="term" value="C:cytoplasm"/>
    <property type="evidence" value="ECO:0007669"/>
    <property type="project" value="UniProtKB-SubCell"/>
</dbReference>
<dbReference type="GO" id="GO:0005634">
    <property type="term" value="C:nucleus"/>
    <property type="evidence" value="ECO:0000314"/>
    <property type="project" value="SGD"/>
</dbReference>
<dbReference type="GO" id="GO:0004190">
    <property type="term" value="F:aspartic-type endopeptidase activity"/>
    <property type="evidence" value="ECO:0007669"/>
    <property type="project" value="UniProtKB-KW"/>
</dbReference>
<dbReference type="GO" id="GO:0005524">
    <property type="term" value="F:ATP binding"/>
    <property type="evidence" value="ECO:0007669"/>
    <property type="project" value="UniProtKB-KW"/>
</dbReference>
<dbReference type="GO" id="GO:0003677">
    <property type="term" value="F:DNA binding"/>
    <property type="evidence" value="ECO:0007669"/>
    <property type="project" value="UniProtKB-KW"/>
</dbReference>
<dbReference type="GO" id="GO:0003887">
    <property type="term" value="F:DNA-directed DNA polymerase activity"/>
    <property type="evidence" value="ECO:0007669"/>
    <property type="project" value="UniProtKB-KW"/>
</dbReference>
<dbReference type="GO" id="GO:0003723">
    <property type="term" value="F:RNA binding"/>
    <property type="evidence" value="ECO:0007669"/>
    <property type="project" value="UniProtKB-KW"/>
</dbReference>
<dbReference type="GO" id="GO:0003964">
    <property type="term" value="F:RNA-directed DNA polymerase activity"/>
    <property type="evidence" value="ECO:0007669"/>
    <property type="project" value="UniProtKB-KW"/>
</dbReference>
<dbReference type="GO" id="GO:0004523">
    <property type="term" value="F:RNA-DNA hybrid ribonuclease activity"/>
    <property type="evidence" value="ECO:0007669"/>
    <property type="project" value="UniProtKB-EC"/>
</dbReference>
<dbReference type="GO" id="GO:0008270">
    <property type="term" value="F:zinc ion binding"/>
    <property type="evidence" value="ECO:0007669"/>
    <property type="project" value="UniProtKB-KW"/>
</dbReference>
<dbReference type="GO" id="GO:0015074">
    <property type="term" value="P:DNA integration"/>
    <property type="evidence" value="ECO:0007669"/>
    <property type="project" value="UniProtKB-KW"/>
</dbReference>
<dbReference type="GO" id="GO:0006310">
    <property type="term" value="P:DNA recombination"/>
    <property type="evidence" value="ECO:0007669"/>
    <property type="project" value="UniProtKB-KW"/>
</dbReference>
<dbReference type="GO" id="GO:0006508">
    <property type="term" value="P:proteolysis"/>
    <property type="evidence" value="ECO:0007669"/>
    <property type="project" value="UniProtKB-KW"/>
</dbReference>
<dbReference type="GO" id="GO:0032196">
    <property type="term" value="P:transposition"/>
    <property type="evidence" value="ECO:0007669"/>
    <property type="project" value="UniProtKB-KW"/>
</dbReference>
<dbReference type="GO" id="GO:0075523">
    <property type="term" value="P:viral translational frameshifting"/>
    <property type="evidence" value="ECO:0007669"/>
    <property type="project" value="UniProtKB-KW"/>
</dbReference>
<dbReference type="CDD" id="cd09272">
    <property type="entry name" value="RNase_HI_RT_Ty1"/>
    <property type="match status" value="1"/>
</dbReference>
<dbReference type="FunFam" id="3.30.420.10:FF:000050">
    <property type="entry name" value="Transposon Ty2-DR3 Gag-Pol polyprotein"/>
    <property type="match status" value="1"/>
</dbReference>
<dbReference type="Gene3D" id="3.30.420.10">
    <property type="entry name" value="Ribonuclease H-like superfamily/Ribonuclease H"/>
    <property type="match status" value="1"/>
</dbReference>
<dbReference type="InterPro" id="IPR001969">
    <property type="entry name" value="Aspartic_peptidase_AS"/>
</dbReference>
<dbReference type="InterPro" id="IPR043502">
    <property type="entry name" value="DNA/RNA_pol_sf"/>
</dbReference>
<dbReference type="InterPro" id="IPR001584">
    <property type="entry name" value="Integrase_cat-core"/>
</dbReference>
<dbReference type="InterPro" id="IPR039537">
    <property type="entry name" value="Retrotran_Ty1/copia-like"/>
</dbReference>
<dbReference type="InterPro" id="IPR012337">
    <property type="entry name" value="RNaseH-like_sf"/>
</dbReference>
<dbReference type="InterPro" id="IPR036397">
    <property type="entry name" value="RNaseH_sf"/>
</dbReference>
<dbReference type="InterPro" id="IPR013103">
    <property type="entry name" value="RVT_2"/>
</dbReference>
<dbReference type="InterPro" id="IPR015820">
    <property type="entry name" value="TYA"/>
</dbReference>
<dbReference type="PANTHER" id="PTHR42648">
    <property type="entry name" value="TRANSPOSASE, PUTATIVE-RELATED"/>
    <property type="match status" value="1"/>
</dbReference>
<dbReference type="PANTHER" id="PTHR42648:SF11">
    <property type="entry name" value="TRANSPOSON TY4-P GAG-POL POLYPROTEIN"/>
    <property type="match status" value="1"/>
</dbReference>
<dbReference type="Pfam" id="PF00665">
    <property type="entry name" value="rve"/>
    <property type="match status" value="1"/>
</dbReference>
<dbReference type="Pfam" id="PF07727">
    <property type="entry name" value="RVT_2"/>
    <property type="match status" value="1"/>
</dbReference>
<dbReference type="Pfam" id="PF01021">
    <property type="entry name" value="TYA"/>
    <property type="match status" value="1"/>
</dbReference>
<dbReference type="SUPFAM" id="SSF56672">
    <property type="entry name" value="DNA/RNA polymerases"/>
    <property type="match status" value="1"/>
</dbReference>
<dbReference type="SUPFAM" id="SSF53098">
    <property type="entry name" value="Ribonuclease H-like"/>
    <property type="match status" value="1"/>
</dbReference>
<dbReference type="PROSITE" id="PS00141">
    <property type="entry name" value="ASP_PROTEASE"/>
    <property type="match status" value="1"/>
</dbReference>
<dbReference type="PROSITE" id="PS50994">
    <property type="entry name" value="INTEGRASE"/>
    <property type="match status" value="1"/>
</dbReference>
<sequence length="1755" mass="198527">MESQQLSNYPHISHGSACASVTSKEVHTNQDPLDVSASKIQEYDKASTKANSQQTTTPASSAVPENPHHASPQPASVPPPQNGPYPQQCMMTQNQANPSGWSFYGHPSMIPYTPYQMSPMYFPPGPQSQFPQYPSSVGTPLSTPSPESGNTFTDSSSADSDMTSTKKYVRPPPMLTSPNDFPNWVKTYIKFLQNSNLGGIIPTVNGKPVRQITDDELTFLYNTFQIFAPSQFLPTWVKDILSVDYTDIMKILSKSIEKMQSDTQEANDIVTLANLQYNGSTPADAFETKVTNIIDRLNNNGIHINNKVACQLIMRGLSGEYKFLRYTRHRHLNMTVAELFLDIHAIYEEQQGSRNSKPNYRRNPSDEKNDSRSYTNTTKPKVIARNPQKTNNSKSKTARAHNVSTSNNSPSTDNDSISKSTTEPIQLNNKHDLHLGQKLTESTVNHTNHSDDELPGHLLLDSGASRTLIRSAHHIHSASSNPDINVVDAQKRNIPINAIGDLQFHFQDNTKTSIKVLHTPNIAYDLLSLNELAAVDITACFTKNVLERSDGTVLAPIVKYGDFYWVSKKYLLPSNISVPTINNVHTSESTRKYPYPFIHRMLAHANAQTIRYSLKNNTITYFNESDVDWSSAIDYQCPDCLIGKSTKHRHIKGSRLKYQNSYEPFQYLHTDIFGPVHNLPNSAPSYFISFTDETTKFRWVYPLHDRREDSILDVFTTILAFIKNQFQASVLVIQMDRGSEYTNRTLHKFLEKNGITPCYTTTADSRAHGVAERLNRTLLDDCRTQLQCSGLPNHLWFSAIEFSTIVRNSLASPKSKKSARQHAGLAGLDISTLLPFGQPVIVNDHNPNSKIHPRGIPGYALHPSRNSYGYIIYLPSLKKTVDTTNYVILQGKESRLDQFNYDALTFDEDLNRLTASYHSFIASNEIQESNDLNIESDHDFQSDIELHPEQPRNVLSKAVSPTDSTPPSTHTEDSKRVSKTNIRAPREVDPNISESNILPSKKRSSTPQISNIESTGSGGMHKLNVPLLAPMSQSNTHESSHASKSKDFRHSDSYSENETNHTNVPISSTGGTNNKTVPQISDQETEKRIIHRSPSIDASPPENNSSHNIVPIKTPTTVSEQNTEESIIADLPLPDLPPESPTEFPDPFKELPPINSHQTNSSLGGIGDSNAYTTINSKKRSLEDNETEIKVSRDTWNTKNMRSLEPPRSKKRIHLIAAVKAVKSIKPIRTTLRYDEAITYNKDIKEKEKYIEAYHKEVNQLLKMNTWDTDKYYDRKEIDPKRVINSMFIFNRKRDGTHKARFVARGDIQHPDTYDSGMQSNTVHHYALMTSLSLALDNNYYITQLDISSAYLYADIKEELYIRPPPHLGMNDKLIRLKKSLYGLKQSGANWYETIKSYLIKQCGMEEVRGWSCVFKNSQVTICLFVDDMILFSKDLNANKKIITTLKKQYDTKIINLGESDNEIQYDILGLEIKYQRGKYMKLGMENSLTEKIPKLNVPLNPKGRKLSAPGQPGLYIDQDELEIDEDEYKEKVHEMQKLIGLASYVGYKFRFDLLYYINTLAQHILFPSRQVLDMTYELIQFMWDTRDKQLIWHKNKPTEPDNKLVAISDASYGNQPYYKSQIGNIYLLNGKVIGGKSTKASLTCTSTTEAEIHAISESVPLLNNLSHLVQELNKKPITKGLLTDSKSTISIIISNNEEKFRNRFFGTKAMRLRDEVSGNHLHVCYIETKKNIADVMTKPLPIKTFKLLTNKWIH</sequence>
<feature type="chain" id="PRO_0000279025" description="Transposon Ty1-DR5 Gag-Pol polyprotein">
    <location>
        <begin position="1"/>
        <end position="1755"/>
    </location>
</feature>
<feature type="chain" id="PRO_0000279026" description="Capsid protein" evidence="1">
    <location>
        <begin position="1"/>
        <end position="401"/>
    </location>
</feature>
<feature type="chain" id="PRO_0000279027" description="Ty1 protease" evidence="1">
    <location>
        <begin position="402"/>
        <end position="582"/>
    </location>
</feature>
<feature type="chain" id="PRO_0000279028" description="Integrase" evidence="1">
    <location>
        <begin position="583"/>
        <end position="1217"/>
    </location>
</feature>
<feature type="chain" id="PRO_0000279029" description="Reverse transcriptase/ribonuclease H" evidence="1">
    <location>
        <begin position="1218"/>
        <end position="1755"/>
    </location>
</feature>
<feature type="domain" description="Integrase catalytic" evidence="2">
    <location>
        <begin position="660"/>
        <end position="835"/>
    </location>
</feature>
<feature type="domain" description="Reverse transcriptase Ty1/copia-type">
    <location>
        <begin position="1338"/>
        <end position="1476"/>
    </location>
</feature>
<feature type="domain" description="RNase H Ty1/copia-type">
    <location>
        <begin position="1610"/>
        <end position="1752"/>
    </location>
</feature>
<feature type="region of interest" description="Disordered" evidence="4">
    <location>
        <begin position="1"/>
        <end position="93"/>
    </location>
</feature>
<feature type="region of interest" description="Disordered" evidence="4">
    <location>
        <begin position="126"/>
        <end position="173"/>
    </location>
</feature>
<feature type="region of interest" description="RNA-binding" evidence="1">
    <location>
        <begin position="299"/>
        <end position="401"/>
    </location>
</feature>
<feature type="region of interest" description="Disordered" evidence="4">
    <location>
        <begin position="352"/>
        <end position="421"/>
    </location>
</feature>
<feature type="region of interest" description="Integrase-type zinc finger-like">
    <location>
        <begin position="583"/>
        <end position="640"/>
    </location>
</feature>
<feature type="region of interest" description="Disordered" evidence="4">
    <location>
        <begin position="956"/>
        <end position="1087"/>
    </location>
</feature>
<feature type="region of interest" description="Disordered" evidence="4">
    <location>
        <begin position="1092"/>
        <end position="1111"/>
    </location>
</feature>
<feature type="region of interest" description="Disordered" evidence="4">
    <location>
        <begin position="1130"/>
        <end position="1187"/>
    </location>
</feature>
<feature type="short sequence motif" description="Bipartite nuclear localization signal" evidence="1">
    <location>
        <begin position="1178"/>
        <end position="1212"/>
    </location>
</feature>
<feature type="compositionally biased region" description="Polar residues" evidence="4">
    <location>
        <begin position="1"/>
        <end position="10"/>
    </location>
</feature>
<feature type="compositionally biased region" description="Polar residues" evidence="4">
    <location>
        <begin position="48"/>
        <end position="60"/>
    </location>
</feature>
<feature type="compositionally biased region" description="Polar residues" evidence="4">
    <location>
        <begin position="127"/>
        <end position="152"/>
    </location>
</feature>
<feature type="compositionally biased region" description="Low complexity" evidence="4">
    <location>
        <begin position="153"/>
        <end position="165"/>
    </location>
</feature>
<feature type="compositionally biased region" description="Low complexity" evidence="4">
    <location>
        <begin position="402"/>
        <end position="418"/>
    </location>
</feature>
<feature type="compositionally biased region" description="Low complexity" evidence="4">
    <location>
        <begin position="960"/>
        <end position="969"/>
    </location>
</feature>
<feature type="compositionally biased region" description="Polar residues" evidence="4">
    <location>
        <begin position="1005"/>
        <end position="1015"/>
    </location>
</feature>
<feature type="compositionally biased region" description="Basic and acidic residues" evidence="4">
    <location>
        <begin position="1038"/>
        <end position="1053"/>
    </location>
</feature>
<feature type="compositionally biased region" description="Polar residues" evidence="4">
    <location>
        <begin position="1054"/>
        <end position="1082"/>
    </location>
</feature>
<feature type="compositionally biased region" description="Polar residues" evidence="4">
    <location>
        <begin position="1101"/>
        <end position="1111"/>
    </location>
</feature>
<feature type="active site" description="For protease activity; shared with dimeric partner" evidence="3">
    <location>
        <position position="461"/>
    </location>
</feature>
<feature type="binding site" evidence="2">
    <location>
        <position position="671"/>
    </location>
    <ligand>
        <name>Mg(2+)</name>
        <dbReference type="ChEBI" id="CHEBI:18420"/>
        <label>1</label>
        <note>catalytic; for integrase activity</note>
    </ligand>
</feature>
<feature type="binding site" evidence="2">
    <location>
        <position position="736"/>
    </location>
    <ligand>
        <name>Mg(2+)</name>
        <dbReference type="ChEBI" id="CHEBI:18420"/>
        <label>1</label>
        <note>catalytic; for integrase activity</note>
    </ligand>
</feature>
<feature type="binding site" evidence="2">
    <location>
        <position position="1346"/>
    </location>
    <ligand>
        <name>Mg(2+)</name>
        <dbReference type="ChEBI" id="CHEBI:18420"/>
        <label>2</label>
        <note>catalytic; for reverse transcriptase activity</note>
    </ligand>
</feature>
<feature type="binding site" evidence="2">
    <location>
        <position position="1427"/>
    </location>
    <ligand>
        <name>Mg(2+)</name>
        <dbReference type="ChEBI" id="CHEBI:18420"/>
        <label>2</label>
        <note>catalytic; for reverse transcriptase activity</note>
    </ligand>
</feature>
<feature type="binding site" evidence="2">
    <location>
        <position position="1428"/>
    </location>
    <ligand>
        <name>Mg(2+)</name>
        <dbReference type="ChEBI" id="CHEBI:18420"/>
        <label>2</label>
        <note>catalytic; for reverse transcriptase activity</note>
    </ligand>
</feature>
<feature type="binding site" evidence="2">
    <location>
        <position position="1610"/>
    </location>
    <ligand>
        <name>Mg(2+)</name>
        <dbReference type="ChEBI" id="CHEBI:18420"/>
        <label>3</label>
        <note>catalytic; for RNase H activity</note>
    </ligand>
</feature>
<feature type="binding site" evidence="2">
    <location>
        <position position="1652"/>
    </location>
    <ligand>
        <name>Mg(2+)</name>
        <dbReference type="ChEBI" id="CHEBI:18420"/>
        <label>3</label>
        <note>catalytic; for RNase H activity</note>
    </ligand>
</feature>
<feature type="binding site" evidence="2">
    <location>
        <position position="1685"/>
    </location>
    <ligand>
        <name>Mg(2+)</name>
        <dbReference type="ChEBI" id="CHEBI:18420"/>
        <label>3</label>
        <note>catalytic; for RNase H activity</note>
    </ligand>
</feature>
<feature type="site" description="Cleavage; by Ty1 protease" evidence="1">
    <location>
        <begin position="401"/>
        <end position="402"/>
    </location>
</feature>
<feature type="site" description="Cleavage; by Ty1 protease" evidence="1">
    <location>
        <begin position="582"/>
        <end position="583"/>
    </location>
</feature>
<feature type="site" description="Cleavage; by Ty1 protease" evidence="1">
    <location>
        <begin position="1217"/>
        <end position="1218"/>
    </location>
</feature>
<gene>
    <name type="primary">TY1B-DR5</name>
    <name type="synonym">YDRWTy1-4 POL</name>
    <name type="ordered locus">YDR316W-B</name>
    <name type="ORF">D9740.1</name>
</gene>